<reference key="1">
    <citation type="journal article" date="2006" name="J. Bacteriol.">
        <title>Pathogenomic sequence analysis of Bacillus cereus and Bacillus thuringiensis isolates closely related to Bacillus anthracis.</title>
        <authorList>
            <person name="Han C.S."/>
            <person name="Xie G."/>
            <person name="Challacombe J.F."/>
            <person name="Altherr M.R."/>
            <person name="Bhotika S.S."/>
            <person name="Bruce D."/>
            <person name="Campbell C.S."/>
            <person name="Campbell M.L."/>
            <person name="Chen J."/>
            <person name="Chertkov O."/>
            <person name="Cleland C."/>
            <person name="Dimitrijevic M."/>
            <person name="Doggett N.A."/>
            <person name="Fawcett J.J."/>
            <person name="Glavina T."/>
            <person name="Goodwin L.A."/>
            <person name="Hill K.K."/>
            <person name="Hitchcock P."/>
            <person name="Jackson P.J."/>
            <person name="Keim P."/>
            <person name="Kewalramani A.R."/>
            <person name="Longmire J."/>
            <person name="Lucas S."/>
            <person name="Malfatti S."/>
            <person name="McMurry K."/>
            <person name="Meincke L.J."/>
            <person name="Misra M."/>
            <person name="Moseman B.L."/>
            <person name="Mundt M."/>
            <person name="Munk A.C."/>
            <person name="Okinaka R.T."/>
            <person name="Parson-Quintana B."/>
            <person name="Reilly L.P."/>
            <person name="Richardson P."/>
            <person name="Robinson D.L."/>
            <person name="Rubin E."/>
            <person name="Saunders E."/>
            <person name="Tapia R."/>
            <person name="Tesmer J.G."/>
            <person name="Thayer N."/>
            <person name="Thompson L.S."/>
            <person name="Tice H."/>
            <person name="Ticknor L.O."/>
            <person name="Wills P.L."/>
            <person name="Brettin T.S."/>
            <person name="Gilna P."/>
        </authorList>
    </citation>
    <scope>NUCLEOTIDE SEQUENCE [LARGE SCALE GENOMIC DNA]</scope>
    <source>
        <strain>97-27</strain>
    </source>
</reference>
<gene>
    <name evidence="1" type="primary">rplW</name>
    <name type="ordered locus">BT9727_0108</name>
</gene>
<protein>
    <recommendedName>
        <fullName evidence="1">Large ribosomal subunit protein uL23</fullName>
    </recommendedName>
    <alternativeName>
        <fullName evidence="2">50S ribosomal protein L23</fullName>
    </alternativeName>
</protein>
<organism>
    <name type="scientific">Bacillus thuringiensis subsp. konkukian (strain 97-27)</name>
    <dbReference type="NCBI Taxonomy" id="281309"/>
    <lineage>
        <taxon>Bacteria</taxon>
        <taxon>Bacillati</taxon>
        <taxon>Bacillota</taxon>
        <taxon>Bacilli</taxon>
        <taxon>Bacillales</taxon>
        <taxon>Bacillaceae</taxon>
        <taxon>Bacillus</taxon>
        <taxon>Bacillus cereus group</taxon>
    </lineage>
</organism>
<comment type="function">
    <text evidence="1">One of the early assembly proteins it binds 23S rRNA. One of the proteins that surrounds the polypeptide exit tunnel on the outside of the ribosome. Forms the main docking site for trigger factor binding to the ribosome.</text>
</comment>
<comment type="subunit">
    <text evidence="1">Part of the 50S ribosomal subunit. Contacts protein L29, and trigger factor when it is bound to the ribosome.</text>
</comment>
<comment type="similarity">
    <text evidence="1">Belongs to the universal ribosomal protein uL23 family.</text>
</comment>
<feature type="chain" id="PRO_0000272703" description="Large ribosomal subunit protein uL23">
    <location>
        <begin position="1"/>
        <end position="96"/>
    </location>
</feature>
<keyword id="KW-0687">Ribonucleoprotein</keyword>
<keyword id="KW-0689">Ribosomal protein</keyword>
<keyword id="KW-0694">RNA-binding</keyword>
<keyword id="KW-0699">rRNA-binding</keyword>
<proteinExistence type="inferred from homology"/>
<dbReference type="EMBL" id="AE017355">
    <property type="protein sequence ID" value="AAT61469.1"/>
    <property type="molecule type" value="Genomic_DNA"/>
</dbReference>
<dbReference type="RefSeq" id="WP_001205558.1">
    <property type="nucleotide sequence ID" value="NC_005957.1"/>
</dbReference>
<dbReference type="RefSeq" id="YP_034464.1">
    <property type="nucleotide sequence ID" value="NC_005957.1"/>
</dbReference>
<dbReference type="SMR" id="Q6HPQ6"/>
<dbReference type="GeneID" id="93010941"/>
<dbReference type="KEGG" id="btk:BT9727_0108"/>
<dbReference type="PATRIC" id="fig|281309.8.peg.109"/>
<dbReference type="HOGENOM" id="CLU_037562_3_2_9"/>
<dbReference type="PRO" id="PR:Q6HPQ6"/>
<dbReference type="Proteomes" id="UP000001301">
    <property type="component" value="Chromosome"/>
</dbReference>
<dbReference type="GO" id="GO:1990904">
    <property type="term" value="C:ribonucleoprotein complex"/>
    <property type="evidence" value="ECO:0007669"/>
    <property type="project" value="UniProtKB-KW"/>
</dbReference>
<dbReference type="GO" id="GO:0005840">
    <property type="term" value="C:ribosome"/>
    <property type="evidence" value="ECO:0007669"/>
    <property type="project" value="UniProtKB-KW"/>
</dbReference>
<dbReference type="GO" id="GO:0019843">
    <property type="term" value="F:rRNA binding"/>
    <property type="evidence" value="ECO:0007669"/>
    <property type="project" value="UniProtKB-UniRule"/>
</dbReference>
<dbReference type="GO" id="GO:0003735">
    <property type="term" value="F:structural constituent of ribosome"/>
    <property type="evidence" value="ECO:0007669"/>
    <property type="project" value="InterPro"/>
</dbReference>
<dbReference type="GO" id="GO:0006412">
    <property type="term" value="P:translation"/>
    <property type="evidence" value="ECO:0007669"/>
    <property type="project" value="UniProtKB-UniRule"/>
</dbReference>
<dbReference type="FunFam" id="3.30.70.330:FF:000001">
    <property type="entry name" value="50S ribosomal protein L23"/>
    <property type="match status" value="1"/>
</dbReference>
<dbReference type="Gene3D" id="3.30.70.330">
    <property type="match status" value="1"/>
</dbReference>
<dbReference type="HAMAP" id="MF_01369_B">
    <property type="entry name" value="Ribosomal_uL23_B"/>
    <property type="match status" value="1"/>
</dbReference>
<dbReference type="InterPro" id="IPR012677">
    <property type="entry name" value="Nucleotide-bd_a/b_plait_sf"/>
</dbReference>
<dbReference type="InterPro" id="IPR013025">
    <property type="entry name" value="Ribosomal_uL23-like"/>
</dbReference>
<dbReference type="InterPro" id="IPR012678">
    <property type="entry name" value="Ribosomal_uL23/eL15/eS24_sf"/>
</dbReference>
<dbReference type="InterPro" id="IPR001014">
    <property type="entry name" value="Ribosomal_uL23_CS"/>
</dbReference>
<dbReference type="NCBIfam" id="NF004363">
    <property type="entry name" value="PRK05738.2-4"/>
    <property type="match status" value="1"/>
</dbReference>
<dbReference type="PANTHER" id="PTHR11620">
    <property type="entry name" value="60S RIBOSOMAL PROTEIN L23A"/>
    <property type="match status" value="1"/>
</dbReference>
<dbReference type="Pfam" id="PF00276">
    <property type="entry name" value="Ribosomal_L23"/>
    <property type="match status" value="1"/>
</dbReference>
<dbReference type="SUPFAM" id="SSF54189">
    <property type="entry name" value="Ribosomal proteins S24e, L23 and L15e"/>
    <property type="match status" value="1"/>
</dbReference>
<dbReference type="PROSITE" id="PS00050">
    <property type="entry name" value="RIBOSOMAL_L23"/>
    <property type="match status" value="1"/>
</dbReference>
<accession>Q6HPQ6</accession>
<name>RL23_BACHK</name>
<sequence length="96" mass="11114">MRDPRDIIKRPVITERSMEMMAEKKYTFDVDVKSNKTEVKDALEAIFGVKVEKVNIMNYKPKAKRVGRHAGFTSRRRKAIVKLTADSKEIEIFQGV</sequence>
<evidence type="ECO:0000255" key="1">
    <source>
        <dbReference type="HAMAP-Rule" id="MF_01369"/>
    </source>
</evidence>
<evidence type="ECO:0000305" key="2"/>